<keyword id="KW-0963">Cytoplasm</keyword>
<keyword id="KW-0275">Fatty acid biosynthesis</keyword>
<keyword id="KW-0276">Fatty acid metabolism</keyword>
<keyword id="KW-0444">Lipid biosynthesis</keyword>
<keyword id="KW-0443">Lipid metabolism</keyword>
<keyword id="KW-0460">Magnesium</keyword>
<keyword id="KW-0479">Metal-binding</keyword>
<keyword id="KW-1185">Reference proteome</keyword>
<keyword id="KW-0808">Transferase</keyword>
<sequence length="133" mass="14680">MIIGLGSDLCNIERIQNSLDRFGERFENRVFTEIERAKARRRPFTIAGTYAKRFAAKEAFSKAVGTGFRRGVFMKDIGVVNARSGAPTLALTGGAAIRLAELLPDGHEASIHLTLTDDHPWAQAFVIIEAHRI</sequence>
<gene>
    <name evidence="1" type="primary">acpS</name>
    <name type="ordered locus">ELI_02710</name>
</gene>
<proteinExistence type="inferred from homology"/>
<reference key="1">
    <citation type="journal article" date="2009" name="J. Bacteriol.">
        <title>Complete genome sequence of Erythrobacter litoralis HTCC2594.</title>
        <authorList>
            <person name="Oh H.M."/>
            <person name="Giovannoni S.J."/>
            <person name="Ferriera S."/>
            <person name="Johnson J."/>
            <person name="Cho J.C."/>
        </authorList>
    </citation>
    <scope>NUCLEOTIDE SEQUENCE [LARGE SCALE GENOMIC DNA]</scope>
    <source>
        <strain>HTCC2594</strain>
    </source>
</reference>
<comment type="function">
    <text evidence="1">Transfers the 4'-phosphopantetheine moiety from coenzyme A to a Ser of acyl-carrier-protein.</text>
</comment>
<comment type="catalytic activity">
    <reaction evidence="1">
        <text>apo-[ACP] + CoA = holo-[ACP] + adenosine 3',5'-bisphosphate + H(+)</text>
        <dbReference type="Rhea" id="RHEA:12068"/>
        <dbReference type="Rhea" id="RHEA-COMP:9685"/>
        <dbReference type="Rhea" id="RHEA-COMP:9690"/>
        <dbReference type="ChEBI" id="CHEBI:15378"/>
        <dbReference type="ChEBI" id="CHEBI:29999"/>
        <dbReference type="ChEBI" id="CHEBI:57287"/>
        <dbReference type="ChEBI" id="CHEBI:58343"/>
        <dbReference type="ChEBI" id="CHEBI:64479"/>
        <dbReference type="EC" id="2.7.8.7"/>
    </reaction>
</comment>
<comment type="cofactor">
    <cofactor evidence="1">
        <name>Mg(2+)</name>
        <dbReference type="ChEBI" id="CHEBI:18420"/>
    </cofactor>
</comment>
<comment type="subcellular location">
    <subcellularLocation>
        <location evidence="1">Cytoplasm</location>
    </subcellularLocation>
</comment>
<comment type="similarity">
    <text evidence="1">Belongs to the P-Pant transferase superfamily. AcpS family.</text>
</comment>
<accession>Q2NCF7</accession>
<dbReference type="EC" id="2.7.8.7" evidence="1"/>
<dbReference type="EMBL" id="CP000157">
    <property type="protein sequence ID" value="ABC62634.1"/>
    <property type="molecule type" value="Genomic_DNA"/>
</dbReference>
<dbReference type="RefSeq" id="WP_011413510.1">
    <property type="nucleotide sequence ID" value="NC_007722.1"/>
</dbReference>
<dbReference type="SMR" id="Q2NCF7"/>
<dbReference type="STRING" id="314225.ELI_02710"/>
<dbReference type="KEGG" id="eli:ELI_02710"/>
<dbReference type="eggNOG" id="COG0736">
    <property type="taxonomic scope" value="Bacteria"/>
</dbReference>
<dbReference type="HOGENOM" id="CLU_089696_0_2_5"/>
<dbReference type="OrthoDB" id="517356at2"/>
<dbReference type="Proteomes" id="UP000008808">
    <property type="component" value="Chromosome"/>
</dbReference>
<dbReference type="GO" id="GO:0005737">
    <property type="term" value="C:cytoplasm"/>
    <property type="evidence" value="ECO:0007669"/>
    <property type="project" value="UniProtKB-SubCell"/>
</dbReference>
<dbReference type="GO" id="GO:0008897">
    <property type="term" value="F:holo-[acyl-carrier-protein] synthase activity"/>
    <property type="evidence" value="ECO:0007669"/>
    <property type="project" value="UniProtKB-UniRule"/>
</dbReference>
<dbReference type="GO" id="GO:0000287">
    <property type="term" value="F:magnesium ion binding"/>
    <property type="evidence" value="ECO:0007669"/>
    <property type="project" value="UniProtKB-UniRule"/>
</dbReference>
<dbReference type="GO" id="GO:0006633">
    <property type="term" value="P:fatty acid biosynthetic process"/>
    <property type="evidence" value="ECO:0007669"/>
    <property type="project" value="UniProtKB-UniRule"/>
</dbReference>
<dbReference type="Gene3D" id="3.90.470.20">
    <property type="entry name" value="4'-phosphopantetheinyl transferase domain"/>
    <property type="match status" value="1"/>
</dbReference>
<dbReference type="HAMAP" id="MF_00101">
    <property type="entry name" value="AcpS"/>
    <property type="match status" value="1"/>
</dbReference>
<dbReference type="InterPro" id="IPR008278">
    <property type="entry name" value="4-PPantetheinyl_Trfase_dom"/>
</dbReference>
<dbReference type="InterPro" id="IPR037143">
    <property type="entry name" value="4-PPantetheinyl_Trfase_dom_sf"/>
</dbReference>
<dbReference type="InterPro" id="IPR002582">
    <property type="entry name" value="ACPS"/>
</dbReference>
<dbReference type="InterPro" id="IPR004568">
    <property type="entry name" value="Ppantetheine-prot_Trfase_dom"/>
</dbReference>
<dbReference type="NCBIfam" id="TIGR00516">
    <property type="entry name" value="acpS"/>
    <property type="match status" value="1"/>
</dbReference>
<dbReference type="NCBIfam" id="TIGR00556">
    <property type="entry name" value="pantethn_trn"/>
    <property type="match status" value="1"/>
</dbReference>
<dbReference type="Pfam" id="PF01648">
    <property type="entry name" value="ACPS"/>
    <property type="match status" value="1"/>
</dbReference>
<dbReference type="SUPFAM" id="SSF56214">
    <property type="entry name" value="4'-phosphopantetheinyl transferase"/>
    <property type="match status" value="1"/>
</dbReference>
<evidence type="ECO:0000255" key="1">
    <source>
        <dbReference type="HAMAP-Rule" id="MF_00101"/>
    </source>
</evidence>
<name>ACPS_ERYLH</name>
<feature type="chain" id="PRO_1000008425" description="Holo-[acyl-carrier-protein] synthase">
    <location>
        <begin position="1"/>
        <end position="133"/>
    </location>
</feature>
<feature type="binding site" evidence="1">
    <location>
        <position position="8"/>
    </location>
    <ligand>
        <name>Mg(2+)</name>
        <dbReference type="ChEBI" id="CHEBI:18420"/>
    </ligand>
</feature>
<feature type="binding site" evidence="1">
    <location>
        <position position="58"/>
    </location>
    <ligand>
        <name>Mg(2+)</name>
        <dbReference type="ChEBI" id="CHEBI:18420"/>
    </ligand>
</feature>
<organism>
    <name type="scientific">Erythrobacter litoralis (strain HTCC2594)</name>
    <dbReference type="NCBI Taxonomy" id="314225"/>
    <lineage>
        <taxon>Bacteria</taxon>
        <taxon>Pseudomonadati</taxon>
        <taxon>Pseudomonadota</taxon>
        <taxon>Alphaproteobacteria</taxon>
        <taxon>Sphingomonadales</taxon>
        <taxon>Erythrobacteraceae</taxon>
        <taxon>Erythrobacter/Porphyrobacter group</taxon>
        <taxon>Erythrobacter</taxon>
    </lineage>
</organism>
<protein>
    <recommendedName>
        <fullName evidence="1">Holo-[acyl-carrier-protein] synthase</fullName>
        <shortName evidence="1">Holo-ACP synthase</shortName>
        <ecNumber evidence="1">2.7.8.7</ecNumber>
    </recommendedName>
    <alternativeName>
        <fullName evidence="1">4'-phosphopantetheinyl transferase AcpS</fullName>
    </alternativeName>
</protein>